<name>YIDC_PORGI</name>
<proteinExistence type="inferred from homology"/>
<keyword id="KW-0997">Cell inner membrane</keyword>
<keyword id="KW-1003">Cell membrane</keyword>
<keyword id="KW-0143">Chaperone</keyword>
<keyword id="KW-0472">Membrane</keyword>
<keyword id="KW-0653">Protein transport</keyword>
<keyword id="KW-1185">Reference proteome</keyword>
<keyword id="KW-0812">Transmembrane</keyword>
<keyword id="KW-1133">Transmembrane helix</keyword>
<keyword id="KW-0813">Transport</keyword>
<organism>
    <name type="scientific">Porphyromonas gingivalis (strain ATCC BAA-308 / W83)</name>
    <dbReference type="NCBI Taxonomy" id="242619"/>
    <lineage>
        <taxon>Bacteria</taxon>
        <taxon>Pseudomonadati</taxon>
        <taxon>Bacteroidota</taxon>
        <taxon>Bacteroidia</taxon>
        <taxon>Bacteroidales</taxon>
        <taxon>Porphyromonadaceae</taxon>
        <taxon>Porphyromonas</taxon>
    </lineage>
</organism>
<sequence length="627" mass="72008">MDKNTVIGLVLIGLVIFGFSWLNRPDPQEIEAQRKAAIEAARQDSIAKAEAELLAARTQGATPDSIKQAAGYNQYGLLAAATAGAEEQVELANGKIALKLSTKGGAIREVLLRDYKTHDGKPLYLFREGESDFNLPLRTVDNRLVDTRDLYFSPISRTDSSVVMRLAVDSASYLDLAYVLLPDDYRLRMTVSGQNLQSLFPANMTMQDLEWSQRIRRQEKSWKFENQYTSIYYKYSGDEVDRLSDSKQEDKKTLEEPLHWVSFKDKYFASVLVCDSYFENNKLAQKTAAAGSDYLKNCTMSATFPLDVRSGTKARFTFFFGPLKYNMLRAYDKGMKAEDNLDLDHLVYLGASIFRWINRYMIIPASTFLQQYFSNWGLIILLLTLGIKLLISPLAYKGYLSSAKMRLLRPQVQEINAKYPGKDQESMMKRQSATMNLYRAAGAGPMSGCLPMLLQFPFLIAMYMYFPTTIDIRQQSFLWAEDLSSYDAVFSWTADIPLLSQFYGNHVSLFCLLMSISNILYIRYTMNQSDTGQEGMAMLKWMPYITTVMFLFFFNQNASGLCYYYFLSSIITVIQYMSSRFIINEEKLMAKLEANKTKPRKKSKWMARLEEAQRQQEAMRRQQQKRK</sequence>
<comment type="function">
    <text evidence="1">Required for the insertion and/or proper folding and/or complex formation of integral membrane proteins into the membrane. Involved in integration of membrane proteins that insert both dependently and independently of the Sec translocase complex, as well as at least some lipoproteins. Aids folding of multispanning membrane proteins.</text>
</comment>
<comment type="subunit">
    <text evidence="1">Interacts with the Sec translocase complex via SecD. Specifically interacts with transmembrane segments of nascent integral membrane proteins during membrane integration.</text>
</comment>
<comment type="subcellular location">
    <subcellularLocation>
        <location evidence="1">Cell inner membrane</location>
        <topology evidence="1">Multi-pass membrane protein</topology>
    </subcellularLocation>
</comment>
<comment type="similarity">
    <text evidence="1">Belongs to the OXA1/ALB3/YidC family. Type 1 subfamily.</text>
</comment>
<reference key="1">
    <citation type="journal article" date="2003" name="J. Bacteriol.">
        <title>Complete genome sequence of the oral pathogenic bacterium Porphyromonas gingivalis strain W83.</title>
        <authorList>
            <person name="Nelson K.E."/>
            <person name="Fleischmann R.D."/>
            <person name="DeBoy R.T."/>
            <person name="Paulsen I.T."/>
            <person name="Fouts D.E."/>
            <person name="Eisen J.A."/>
            <person name="Daugherty S.C."/>
            <person name="Dodson R.J."/>
            <person name="Durkin A.S."/>
            <person name="Gwinn M.L."/>
            <person name="Haft D.H."/>
            <person name="Kolonay J.F."/>
            <person name="Nelson W.C."/>
            <person name="Mason T.M."/>
            <person name="Tallon L."/>
            <person name="Gray J."/>
            <person name="Granger D."/>
            <person name="Tettelin H."/>
            <person name="Dong H."/>
            <person name="Galvin J.L."/>
            <person name="Duncan M.J."/>
            <person name="Dewhirst F.E."/>
            <person name="Fraser C.M."/>
        </authorList>
    </citation>
    <scope>NUCLEOTIDE SEQUENCE [LARGE SCALE GENOMIC DNA]</scope>
    <source>
        <strain>ATCC BAA-308 / W83</strain>
    </source>
</reference>
<dbReference type="EMBL" id="AE015924">
    <property type="protein sequence ID" value="AAQ65720.1"/>
    <property type="molecule type" value="Genomic_DNA"/>
</dbReference>
<dbReference type="RefSeq" id="WP_005875081.1">
    <property type="nucleotide sequence ID" value="NC_002950.2"/>
</dbReference>
<dbReference type="SMR" id="P60036"/>
<dbReference type="STRING" id="242619.PG_0526"/>
<dbReference type="EnsemblBacteria" id="AAQ65720">
    <property type="protein sequence ID" value="AAQ65720"/>
    <property type="gene ID" value="PG_0526"/>
</dbReference>
<dbReference type="KEGG" id="pgi:PG_0526"/>
<dbReference type="PATRIC" id="fig|242619.8.peg.481"/>
<dbReference type="eggNOG" id="COG0706">
    <property type="taxonomic scope" value="Bacteria"/>
</dbReference>
<dbReference type="HOGENOM" id="CLU_016535_2_0_10"/>
<dbReference type="BioCyc" id="PGIN242619:G1G02-485-MONOMER"/>
<dbReference type="Proteomes" id="UP000000588">
    <property type="component" value="Chromosome"/>
</dbReference>
<dbReference type="GO" id="GO:0005886">
    <property type="term" value="C:plasma membrane"/>
    <property type="evidence" value="ECO:0007669"/>
    <property type="project" value="UniProtKB-SubCell"/>
</dbReference>
<dbReference type="GO" id="GO:0032977">
    <property type="term" value="F:membrane insertase activity"/>
    <property type="evidence" value="ECO:0007669"/>
    <property type="project" value="InterPro"/>
</dbReference>
<dbReference type="GO" id="GO:0051205">
    <property type="term" value="P:protein insertion into membrane"/>
    <property type="evidence" value="ECO:0007669"/>
    <property type="project" value="TreeGrafter"/>
</dbReference>
<dbReference type="GO" id="GO:0015031">
    <property type="term" value="P:protein transport"/>
    <property type="evidence" value="ECO:0007669"/>
    <property type="project" value="UniProtKB-KW"/>
</dbReference>
<dbReference type="CDD" id="cd20070">
    <property type="entry name" value="5TM_YidC_Alb3"/>
    <property type="match status" value="1"/>
</dbReference>
<dbReference type="CDD" id="cd19961">
    <property type="entry name" value="EcYidC-like_peri"/>
    <property type="match status" value="1"/>
</dbReference>
<dbReference type="Gene3D" id="2.70.98.90">
    <property type="match status" value="1"/>
</dbReference>
<dbReference type="HAMAP" id="MF_01810">
    <property type="entry name" value="YidC_type1"/>
    <property type="match status" value="1"/>
</dbReference>
<dbReference type="InterPro" id="IPR019998">
    <property type="entry name" value="Membr_insert_YidC"/>
</dbReference>
<dbReference type="InterPro" id="IPR028053">
    <property type="entry name" value="Membr_insert_YidC_N"/>
</dbReference>
<dbReference type="InterPro" id="IPR001708">
    <property type="entry name" value="YidC/ALB3/OXA1/COX18"/>
</dbReference>
<dbReference type="InterPro" id="IPR028055">
    <property type="entry name" value="YidC/Oxa/ALB_C"/>
</dbReference>
<dbReference type="InterPro" id="IPR047196">
    <property type="entry name" value="YidC_ALB_C"/>
</dbReference>
<dbReference type="InterPro" id="IPR038221">
    <property type="entry name" value="YidC_periplasmic_sf"/>
</dbReference>
<dbReference type="NCBIfam" id="NF002356">
    <property type="entry name" value="PRK01318.2-3"/>
    <property type="match status" value="1"/>
</dbReference>
<dbReference type="NCBIfam" id="TIGR03593">
    <property type="entry name" value="yidC_nterm"/>
    <property type="match status" value="1"/>
</dbReference>
<dbReference type="NCBIfam" id="TIGR03592">
    <property type="entry name" value="yidC_oxa1_cterm"/>
    <property type="match status" value="1"/>
</dbReference>
<dbReference type="PANTHER" id="PTHR12428:SF65">
    <property type="entry name" value="CYTOCHROME C OXIDASE ASSEMBLY PROTEIN COX18, MITOCHONDRIAL"/>
    <property type="match status" value="1"/>
</dbReference>
<dbReference type="PANTHER" id="PTHR12428">
    <property type="entry name" value="OXA1"/>
    <property type="match status" value="1"/>
</dbReference>
<dbReference type="Pfam" id="PF02096">
    <property type="entry name" value="60KD_IMP"/>
    <property type="match status" value="1"/>
</dbReference>
<dbReference type="Pfam" id="PF14849">
    <property type="entry name" value="YidC_periplas"/>
    <property type="match status" value="1"/>
</dbReference>
<dbReference type="PRINTS" id="PR00701">
    <property type="entry name" value="60KDINNERMP"/>
</dbReference>
<gene>
    <name evidence="1" type="primary">yidC</name>
    <name type="ordered locus">PG_0526</name>
</gene>
<accession>P60036</accession>
<evidence type="ECO:0000255" key="1">
    <source>
        <dbReference type="HAMAP-Rule" id="MF_01810"/>
    </source>
</evidence>
<feature type="chain" id="PRO_0000124736" description="Membrane protein insertase YidC">
    <location>
        <begin position="1"/>
        <end position="627"/>
    </location>
</feature>
<feature type="transmembrane region" description="Helical" evidence="1">
    <location>
        <begin position="3"/>
        <end position="23"/>
    </location>
</feature>
<feature type="transmembrane region" description="Helical" evidence="1">
    <location>
        <begin position="376"/>
        <end position="396"/>
    </location>
</feature>
<feature type="transmembrane region" description="Helical" evidence="1">
    <location>
        <begin position="450"/>
        <end position="470"/>
    </location>
</feature>
<feature type="transmembrane region" description="Helical" evidence="1">
    <location>
        <begin position="502"/>
        <end position="522"/>
    </location>
</feature>
<feature type="transmembrane region" description="Helical" evidence="1">
    <location>
        <begin position="534"/>
        <end position="554"/>
    </location>
</feature>
<feature type="transmembrane region" description="Helical" evidence="1">
    <location>
        <begin position="558"/>
        <end position="578"/>
    </location>
</feature>
<protein>
    <recommendedName>
        <fullName evidence="1">Membrane protein insertase YidC</fullName>
    </recommendedName>
    <alternativeName>
        <fullName evidence="1">Foldase YidC</fullName>
    </alternativeName>
    <alternativeName>
        <fullName evidence="1">Membrane integrase YidC</fullName>
    </alternativeName>
    <alternativeName>
        <fullName evidence="1">Membrane protein YidC</fullName>
    </alternativeName>
</protein>